<accession>Q88FC9</accession>
<proteinExistence type="inferred from homology"/>
<comment type="function">
    <text evidence="1">Catalyzes the reduction of the glycolytic intermediate dihydroxyacetone phosphate (DHAP) to sn-glycerol 3-phosphate (G3P), the key precursor for phospholipid synthesis.</text>
</comment>
<comment type="catalytic activity">
    <reaction evidence="1">
        <text>sn-glycerol 3-phosphate + NAD(+) = dihydroxyacetone phosphate + NADH + H(+)</text>
        <dbReference type="Rhea" id="RHEA:11092"/>
        <dbReference type="ChEBI" id="CHEBI:15378"/>
        <dbReference type="ChEBI" id="CHEBI:57540"/>
        <dbReference type="ChEBI" id="CHEBI:57597"/>
        <dbReference type="ChEBI" id="CHEBI:57642"/>
        <dbReference type="ChEBI" id="CHEBI:57945"/>
        <dbReference type="EC" id="1.1.1.94"/>
    </reaction>
    <physiologicalReaction direction="right-to-left" evidence="1">
        <dbReference type="Rhea" id="RHEA:11094"/>
    </physiologicalReaction>
</comment>
<comment type="catalytic activity">
    <reaction evidence="1">
        <text>sn-glycerol 3-phosphate + NADP(+) = dihydroxyacetone phosphate + NADPH + H(+)</text>
        <dbReference type="Rhea" id="RHEA:11096"/>
        <dbReference type="ChEBI" id="CHEBI:15378"/>
        <dbReference type="ChEBI" id="CHEBI:57597"/>
        <dbReference type="ChEBI" id="CHEBI:57642"/>
        <dbReference type="ChEBI" id="CHEBI:57783"/>
        <dbReference type="ChEBI" id="CHEBI:58349"/>
        <dbReference type="EC" id="1.1.1.94"/>
    </reaction>
    <physiologicalReaction direction="right-to-left" evidence="1">
        <dbReference type="Rhea" id="RHEA:11098"/>
    </physiologicalReaction>
</comment>
<comment type="pathway">
    <text evidence="1">Membrane lipid metabolism; glycerophospholipid metabolism.</text>
</comment>
<comment type="subcellular location">
    <subcellularLocation>
        <location evidence="1">Cytoplasm</location>
    </subcellularLocation>
</comment>
<comment type="similarity">
    <text evidence="1">Belongs to the NAD-dependent glycerol-3-phosphate dehydrogenase family.</text>
</comment>
<sequence>MTEQQPVAVLGGGSFGTAVANLLAENGVPVRQWMRDPAQAEAMRVNRENPRYLKGIRLHDGVEPVNDLLATLQASELIFVALPSSALRSVLAPHAELLRGKGLVSLTKGIEAQSFKLMSQILEEIAPEARIGVLSGPNLAREIAEHALTATVVASEHEDLCQQVQAVLHGRTFRVYASADRFGVELGGALKNVYAIIAGMAVALGMGENTKSMLITRALAEMTRFAVSQGANPMTFLGLAGVGDLIVTCSSPKSRNYQVGYALGQGQSLEEAVNRLGEVAEGVNTLKVLKTKAQQVQVYMPLVAGLHAILFEGRTLNQVIEHLMRAEPKTDVDFISISGFN</sequence>
<reference key="1">
    <citation type="journal article" date="2002" name="Environ. Microbiol.">
        <title>Complete genome sequence and comparative analysis of the metabolically versatile Pseudomonas putida KT2440.</title>
        <authorList>
            <person name="Nelson K.E."/>
            <person name="Weinel C."/>
            <person name="Paulsen I.T."/>
            <person name="Dodson R.J."/>
            <person name="Hilbert H."/>
            <person name="Martins dos Santos V.A.P."/>
            <person name="Fouts D.E."/>
            <person name="Gill S.R."/>
            <person name="Pop M."/>
            <person name="Holmes M."/>
            <person name="Brinkac L.M."/>
            <person name="Beanan M.J."/>
            <person name="DeBoy R.T."/>
            <person name="Daugherty S.C."/>
            <person name="Kolonay J.F."/>
            <person name="Madupu R."/>
            <person name="Nelson W.C."/>
            <person name="White O."/>
            <person name="Peterson J.D."/>
            <person name="Khouri H.M."/>
            <person name="Hance I."/>
            <person name="Chris Lee P."/>
            <person name="Holtzapple E.K."/>
            <person name="Scanlan D."/>
            <person name="Tran K."/>
            <person name="Moazzez A."/>
            <person name="Utterback T.R."/>
            <person name="Rizzo M."/>
            <person name="Lee K."/>
            <person name="Kosack D."/>
            <person name="Moestl D."/>
            <person name="Wedler H."/>
            <person name="Lauber J."/>
            <person name="Stjepandic D."/>
            <person name="Hoheisel J."/>
            <person name="Straetz M."/>
            <person name="Heim S."/>
            <person name="Kiewitz C."/>
            <person name="Eisen J.A."/>
            <person name="Timmis K.N."/>
            <person name="Duesterhoeft A."/>
            <person name="Tuemmler B."/>
            <person name="Fraser C.M."/>
        </authorList>
    </citation>
    <scope>NUCLEOTIDE SEQUENCE [LARGE SCALE GENOMIC DNA]</scope>
    <source>
        <strain>ATCC 47054 / DSM 6125 / CFBP 8728 / NCIMB 11950 / KT2440</strain>
    </source>
</reference>
<dbReference type="EC" id="1.1.1.94" evidence="1"/>
<dbReference type="EMBL" id="AE015451">
    <property type="protein sequence ID" value="AAN69750.1"/>
    <property type="molecule type" value="Genomic_DNA"/>
</dbReference>
<dbReference type="RefSeq" id="NP_746286.1">
    <property type="nucleotide sequence ID" value="NC_002947.4"/>
</dbReference>
<dbReference type="RefSeq" id="WP_010954935.1">
    <property type="nucleotide sequence ID" value="NZ_CP169744.1"/>
</dbReference>
<dbReference type="SMR" id="Q88FC9"/>
<dbReference type="STRING" id="160488.PP_4169"/>
<dbReference type="PaxDb" id="160488-PP_4169"/>
<dbReference type="KEGG" id="ppu:PP_4169"/>
<dbReference type="PATRIC" id="fig|160488.4.peg.4432"/>
<dbReference type="eggNOG" id="COG0240">
    <property type="taxonomic scope" value="Bacteria"/>
</dbReference>
<dbReference type="HOGENOM" id="CLU_033449_0_2_6"/>
<dbReference type="OrthoDB" id="9812273at2"/>
<dbReference type="PhylomeDB" id="Q88FC9"/>
<dbReference type="BioCyc" id="PPUT160488:G1G01-4436-MONOMER"/>
<dbReference type="UniPathway" id="UPA00940"/>
<dbReference type="Proteomes" id="UP000000556">
    <property type="component" value="Chromosome"/>
</dbReference>
<dbReference type="GO" id="GO:0005829">
    <property type="term" value="C:cytosol"/>
    <property type="evidence" value="ECO:0007669"/>
    <property type="project" value="TreeGrafter"/>
</dbReference>
<dbReference type="GO" id="GO:0047952">
    <property type="term" value="F:glycerol-3-phosphate dehydrogenase [NAD(P)+] activity"/>
    <property type="evidence" value="ECO:0007669"/>
    <property type="project" value="UniProtKB-UniRule"/>
</dbReference>
<dbReference type="GO" id="GO:0051287">
    <property type="term" value="F:NAD binding"/>
    <property type="evidence" value="ECO:0007669"/>
    <property type="project" value="InterPro"/>
</dbReference>
<dbReference type="GO" id="GO:0005975">
    <property type="term" value="P:carbohydrate metabolic process"/>
    <property type="evidence" value="ECO:0007669"/>
    <property type="project" value="InterPro"/>
</dbReference>
<dbReference type="GO" id="GO:0046167">
    <property type="term" value="P:glycerol-3-phosphate biosynthetic process"/>
    <property type="evidence" value="ECO:0007669"/>
    <property type="project" value="UniProtKB-UniRule"/>
</dbReference>
<dbReference type="GO" id="GO:0046168">
    <property type="term" value="P:glycerol-3-phosphate catabolic process"/>
    <property type="evidence" value="ECO:0007669"/>
    <property type="project" value="InterPro"/>
</dbReference>
<dbReference type="GO" id="GO:0046474">
    <property type="term" value="P:glycerophospholipid biosynthetic process"/>
    <property type="evidence" value="ECO:0007669"/>
    <property type="project" value="TreeGrafter"/>
</dbReference>
<dbReference type="FunFam" id="1.10.1040.10:FF:000001">
    <property type="entry name" value="Glycerol-3-phosphate dehydrogenase [NAD(P)+]"/>
    <property type="match status" value="1"/>
</dbReference>
<dbReference type="FunFam" id="3.40.50.720:FF:000019">
    <property type="entry name" value="Glycerol-3-phosphate dehydrogenase [NAD(P)+]"/>
    <property type="match status" value="1"/>
</dbReference>
<dbReference type="Gene3D" id="1.10.1040.10">
    <property type="entry name" value="N-(1-d-carboxylethyl)-l-norvaline Dehydrogenase, domain 2"/>
    <property type="match status" value="1"/>
</dbReference>
<dbReference type="Gene3D" id="3.40.50.720">
    <property type="entry name" value="NAD(P)-binding Rossmann-like Domain"/>
    <property type="match status" value="1"/>
</dbReference>
<dbReference type="HAMAP" id="MF_00394">
    <property type="entry name" value="NAD_Glyc3P_dehydrog"/>
    <property type="match status" value="1"/>
</dbReference>
<dbReference type="InterPro" id="IPR008927">
    <property type="entry name" value="6-PGluconate_DH-like_C_sf"/>
</dbReference>
<dbReference type="InterPro" id="IPR013328">
    <property type="entry name" value="6PGD_dom2"/>
</dbReference>
<dbReference type="InterPro" id="IPR006168">
    <property type="entry name" value="G3P_DH_NAD-dep"/>
</dbReference>
<dbReference type="InterPro" id="IPR006109">
    <property type="entry name" value="G3P_DH_NAD-dep_C"/>
</dbReference>
<dbReference type="InterPro" id="IPR011128">
    <property type="entry name" value="G3P_DH_NAD-dep_N"/>
</dbReference>
<dbReference type="InterPro" id="IPR036291">
    <property type="entry name" value="NAD(P)-bd_dom_sf"/>
</dbReference>
<dbReference type="NCBIfam" id="NF000940">
    <property type="entry name" value="PRK00094.1-2"/>
    <property type="match status" value="1"/>
</dbReference>
<dbReference type="NCBIfam" id="NF000942">
    <property type="entry name" value="PRK00094.1-4"/>
    <property type="match status" value="1"/>
</dbReference>
<dbReference type="NCBIfam" id="NF000946">
    <property type="entry name" value="PRK00094.2-4"/>
    <property type="match status" value="1"/>
</dbReference>
<dbReference type="PANTHER" id="PTHR11728">
    <property type="entry name" value="GLYCEROL-3-PHOSPHATE DEHYDROGENASE"/>
    <property type="match status" value="1"/>
</dbReference>
<dbReference type="PANTHER" id="PTHR11728:SF1">
    <property type="entry name" value="GLYCEROL-3-PHOSPHATE DEHYDROGENASE [NAD(+)] 2, CHLOROPLASTIC"/>
    <property type="match status" value="1"/>
</dbReference>
<dbReference type="Pfam" id="PF07479">
    <property type="entry name" value="NAD_Gly3P_dh_C"/>
    <property type="match status" value="1"/>
</dbReference>
<dbReference type="Pfam" id="PF01210">
    <property type="entry name" value="NAD_Gly3P_dh_N"/>
    <property type="match status" value="1"/>
</dbReference>
<dbReference type="PIRSF" id="PIRSF000114">
    <property type="entry name" value="Glycerol-3-P_dh"/>
    <property type="match status" value="1"/>
</dbReference>
<dbReference type="PRINTS" id="PR00077">
    <property type="entry name" value="GPDHDRGNASE"/>
</dbReference>
<dbReference type="SUPFAM" id="SSF48179">
    <property type="entry name" value="6-phosphogluconate dehydrogenase C-terminal domain-like"/>
    <property type="match status" value="1"/>
</dbReference>
<dbReference type="SUPFAM" id="SSF51735">
    <property type="entry name" value="NAD(P)-binding Rossmann-fold domains"/>
    <property type="match status" value="1"/>
</dbReference>
<dbReference type="PROSITE" id="PS00957">
    <property type="entry name" value="NAD_G3PDH"/>
    <property type="match status" value="1"/>
</dbReference>
<keyword id="KW-0963">Cytoplasm</keyword>
<keyword id="KW-0444">Lipid biosynthesis</keyword>
<keyword id="KW-0443">Lipid metabolism</keyword>
<keyword id="KW-0520">NAD</keyword>
<keyword id="KW-0521">NADP</keyword>
<keyword id="KW-0547">Nucleotide-binding</keyword>
<keyword id="KW-0560">Oxidoreductase</keyword>
<keyword id="KW-0594">Phospholipid biosynthesis</keyword>
<keyword id="KW-1208">Phospholipid metabolism</keyword>
<keyword id="KW-1185">Reference proteome</keyword>
<organism>
    <name type="scientific">Pseudomonas putida (strain ATCC 47054 / DSM 6125 / CFBP 8728 / NCIMB 11950 / KT2440)</name>
    <dbReference type="NCBI Taxonomy" id="160488"/>
    <lineage>
        <taxon>Bacteria</taxon>
        <taxon>Pseudomonadati</taxon>
        <taxon>Pseudomonadota</taxon>
        <taxon>Gammaproteobacteria</taxon>
        <taxon>Pseudomonadales</taxon>
        <taxon>Pseudomonadaceae</taxon>
        <taxon>Pseudomonas</taxon>
    </lineage>
</organism>
<protein>
    <recommendedName>
        <fullName evidence="1">Glycerol-3-phosphate dehydrogenase [NAD(P)+]</fullName>
        <ecNumber evidence="1">1.1.1.94</ecNumber>
    </recommendedName>
    <alternativeName>
        <fullName evidence="1">NAD(P)(+)-dependent glycerol-3-phosphate dehydrogenase</fullName>
    </alternativeName>
    <alternativeName>
        <fullName evidence="1">NAD(P)H-dependent dihydroxyacetone-phosphate reductase</fullName>
    </alternativeName>
</protein>
<evidence type="ECO:0000255" key="1">
    <source>
        <dbReference type="HAMAP-Rule" id="MF_00394"/>
    </source>
</evidence>
<feature type="chain" id="PRO_0000138009" description="Glycerol-3-phosphate dehydrogenase [NAD(P)+]">
    <location>
        <begin position="1"/>
        <end position="341"/>
    </location>
</feature>
<feature type="active site" description="Proton acceptor" evidence="1">
    <location>
        <position position="191"/>
    </location>
</feature>
<feature type="binding site" evidence="1">
    <location>
        <position position="14"/>
    </location>
    <ligand>
        <name>NADPH</name>
        <dbReference type="ChEBI" id="CHEBI:57783"/>
    </ligand>
</feature>
<feature type="binding site" evidence="1">
    <location>
        <position position="15"/>
    </location>
    <ligand>
        <name>NADPH</name>
        <dbReference type="ChEBI" id="CHEBI:57783"/>
    </ligand>
</feature>
<feature type="binding site" evidence="1">
    <location>
        <position position="35"/>
    </location>
    <ligand>
        <name>NADPH</name>
        <dbReference type="ChEBI" id="CHEBI:57783"/>
    </ligand>
</feature>
<feature type="binding site" evidence="1">
    <location>
        <position position="108"/>
    </location>
    <ligand>
        <name>NADPH</name>
        <dbReference type="ChEBI" id="CHEBI:57783"/>
    </ligand>
</feature>
<feature type="binding site" evidence="1">
    <location>
        <position position="108"/>
    </location>
    <ligand>
        <name>sn-glycerol 3-phosphate</name>
        <dbReference type="ChEBI" id="CHEBI:57597"/>
    </ligand>
</feature>
<feature type="binding site" evidence="1">
    <location>
        <position position="136"/>
    </location>
    <ligand>
        <name>sn-glycerol 3-phosphate</name>
        <dbReference type="ChEBI" id="CHEBI:57597"/>
    </ligand>
</feature>
<feature type="binding site" evidence="1">
    <location>
        <position position="140"/>
    </location>
    <ligand>
        <name>NADPH</name>
        <dbReference type="ChEBI" id="CHEBI:57783"/>
    </ligand>
</feature>
<feature type="binding site" evidence="1">
    <location>
        <position position="191"/>
    </location>
    <ligand>
        <name>sn-glycerol 3-phosphate</name>
        <dbReference type="ChEBI" id="CHEBI:57597"/>
    </ligand>
</feature>
<feature type="binding site" evidence="1">
    <location>
        <position position="244"/>
    </location>
    <ligand>
        <name>sn-glycerol 3-phosphate</name>
        <dbReference type="ChEBI" id="CHEBI:57597"/>
    </ligand>
</feature>
<feature type="binding site" evidence="1">
    <location>
        <position position="254"/>
    </location>
    <ligand>
        <name>sn-glycerol 3-phosphate</name>
        <dbReference type="ChEBI" id="CHEBI:57597"/>
    </ligand>
</feature>
<feature type="binding site" evidence="1">
    <location>
        <position position="255"/>
    </location>
    <ligand>
        <name>NADPH</name>
        <dbReference type="ChEBI" id="CHEBI:57783"/>
    </ligand>
</feature>
<feature type="binding site" evidence="1">
    <location>
        <position position="255"/>
    </location>
    <ligand>
        <name>sn-glycerol 3-phosphate</name>
        <dbReference type="ChEBI" id="CHEBI:57597"/>
    </ligand>
</feature>
<feature type="binding site" evidence="1">
    <location>
        <position position="256"/>
    </location>
    <ligand>
        <name>sn-glycerol 3-phosphate</name>
        <dbReference type="ChEBI" id="CHEBI:57597"/>
    </ligand>
</feature>
<feature type="binding site" evidence="1">
    <location>
        <position position="279"/>
    </location>
    <ligand>
        <name>NADPH</name>
        <dbReference type="ChEBI" id="CHEBI:57783"/>
    </ligand>
</feature>
<feature type="binding site" evidence="1">
    <location>
        <position position="281"/>
    </location>
    <ligand>
        <name>NADPH</name>
        <dbReference type="ChEBI" id="CHEBI:57783"/>
    </ligand>
</feature>
<name>GPDA_PSEPK</name>
<gene>
    <name evidence="1" type="primary">gpsA</name>
    <name type="ordered locus">PP_4169</name>
</gene>